<gene>
    <name type="primary">P40</name>
</gene>
<protein>
    <recommendedName>
        <fullName>Structural glycoprotein p40</fullName>
    </recommendedName>
</protein>
<sequence length="348" mass="38969">MTDERGNFYYNTPPPPLRYPSNPATAIFTNAQTYNNAPGYVPPATRDNKMDTSRSNSTNSVAIAPYNKSKEPTLDAGESIWYNKCVDFVQKIIRYYRCNDMSELSPLMIHFINTIRDMCIDTNPINVNVVKRFESEETMIRHLIRLQKELGQGNAAESLPSDSNIFQASFVLNSLPAYAQKFYNGGADMLGKDALAEAAKQLSLAVQYMVAESVTCNIPIPLPFNQQLANNYMTLLLKHATLPPNIQSAVESRRFPHINMINDLINAVIDDLFAGGGDYYYYVLNEKNRARIMSLKENVAFLAPLSASANIFNYMAELATRAGKQPSMFQNATFLTSAPTRSIRLPLI</sequence>
<comment type="developmental stage">
    <text>Associated with the polyhedron-derived virus (occluded virus).</text>
</comment>
<comment type="PTM">
    <text evidence="1">O-glycosylated; contains N-acetylglucosamine side chains.</text>
</comment>
<comment type="similarity">
    <text evidence="2">Belongs to the baculoviridae gp41 family.</text>
</comment>
<evidence type="ECO:0000250" key="1"/>
<evidence type="ECO:0000305" key="2"/>
<keyword id="KW-0325">Glycoprotein</keyword>
<keyword id="KW-0426">Late protein</keyword>
<organism>
    <name type="scientific">Bombyx mori nuclear polyhedrosis virus</name>
    <name type="common">BmNPV</name>
    <dbReference type="NCBI Taxonomy" id="271108"/>
    <lineage>
        <taxon>Viruses</taxon>
        <taxon>Viruses incertae sedis</taxon>
        <taxon>Naldaviricetes</taxon>
        <taxon>Lefavirales</taxon>
        <taxon>Baculoviridae</taxon>
        <taxon>Alphabaculovirus</taxon>
        <taxon>Alphabaculovirus bomori</taxon>
    </lineage>
</organism>
<dbReference type="EMBL" id="D14468">
    <property type="protein sequence ID" value="BAA03365.1"/>
    <property type="molecule type" value="Genomic_DNA"/>
</dbReference>
<dbReference type="GO" id="GO:0044423">
    <property type="term" value="C:virion component"/>
    <property type="evidence" value="ECO:0007669"/>
    <property type="project" value="InterPro"/>
</dbReference>
<dbReference type="GO" id="GO:0005198">
    <property type="term" value="F:structural molecule activity"/>
    <property type="evidence" value="ECO:0007669"/>
    <property type="project" value="InterPro"/>
</dbReference>
<dbReference type="InterPro" id="IPR006790">
    <property type="entry name" value="Baculovirus_Gp41"/>
</dbReference>
<dbReference type="Pfam" id="PF04700">
    <property type="entry name" value="Baculo_gp41"/>
    <property type="match status" value="1"/>
</dbReference>
<reference key="1">
    <citation type="journal article" date="1991" name="J. Invertebr. Pathol.">
        <title>Nucleotide sequence of the gene coding for p40, an occluded virion-specific polypeptide of Bombyx mori nuclear polyhedrosis virus.</title>
        <authorList>
            <person name="Nagamine T."/>
            <person name="Sugimori H."/>
            <person name="Nakamura K."/>
            <person name="Saga S."/>
            <person name="Kobayashi M."/>
        </authorList>
    </citation>
    <scope>NUCLEOTIDE SEQUENCE [GENOMIC DNA]</scope>
</reference>
<feature type="chain" id="PRO_0000132906" description="Structural glycoprotein p40">
    <location>
        <begin position="1"/>
        <end position="348"/>
    </location>
</feature>
<accession>P33246</accession>
<name>VP40_NPVBM</name>
<proteinExistence type="evidence at transcript level"/>
<organismHost>
    <name type="scientific">Bombyx mori</name>
    <name type="common">Silk moth</name>
    <dbReference type="NCBI Taxonomy" id="7091"/>
</organismHost>